<evidence type="ECO:0000256" key="1">
    <source>
        <dbReference type="SAM" id="MobiDB-lite"/>
    </source>
</evidence>
<evidence type="ECO:0000305" key="2"/>
<proteinExistence type="inferred from homology"/>
<accession>Q8TUB6</accession>
<dbReference type="EMBL" id="AE010299">
    <property type="protein sequence ID" value="AAM03610.1"/>
    <property type="molecule type" value="Genomic_DNA"/>
</dbReference>
<dbReference type="RefSeq" id="WP_011020215.1">
    <property type="nucleotide sequence ID" value="NC_003552.1"/>
</dbReference>
<dbReference type="STRING" id="188937.MA_0157"/>
<dbReference type="EnsemblBacteria" id="AAM03610">
    <property type="protein sequence ID" value="AAM03610"/>
    <property type="gene ID" value="MA_0157"/>
</dbReference>
<dbReference type="GeneID" id="1472049"/>
<dbReference type="KEGG" id="mac:MA_0157"/>
<dbReference type="HOGENOM" id="CLU_094511_0_0_2"/>
<dbReference type="InParanoid" id="Q8TUB6"/>
<dbReference type="OrthoDB" id="74471at2157"/>
<dbReference type="PhylomeDB" id="Q8TUB6"/>
<dbReference type="Proteomes" id="UP000002487">
    <property type="component" value="Chromosome"/>
</dbReference>
<dbReference type="HAMAP" id="MF_00674">
    <property type="entry name" value="UPF0251"/>
    <property type="match status" value="1"/>
</dbReference>
<dbReference type="InterPro" id="IPR013324">
    <property type="entry name" value="RNA_pol_sigma_r3/r4-like"/>
</dbReference>
<dbReference type="InterPro" id="IPR002852">
    <property type="entry name" value="UPF0251"/>
</dbReference>
<dbReference type="PANTHER" id="PTHR37478">
    <property type="match status" value="1"/>
</dbReference>
<dbReference type="PANTHER" id="PTHR37478:SF2">
    <property type="entry name" value="UPF0251 PROTEIN TK0562"/>
    <property type="match status" value="1"/>
</dbReference>
<dbReference type="Pfam" id="PF02001">
    <property type="entry name" value="DUF134"/>
    <property type="match status" value="1"/>
</dbReference>
<dbReference type="SUPFAM" id="SSF88659">
    <property type="entry name" value="Sigma3 and sigma4 domains of RNA polymerase sigma factors"/>
    <property type="match status" value="1"/>
</dbReference>
<reference key="1">
    <citation type="journal article" date="2002" name="Genome Res.">
        <title>The genome of Methanosarcina acetivorans reveals extensive metabolic and physiological diversity.</title>
        <authorList>
            <person name="Galagan J.E."/>
            <person name="Nusbaum C."/>
            <person name="Roy A."/>
            <person name="Endrizzi M.G."/>
            <person name="Macdonald P."/>
            <person name="FitzHugh W."/>
            <person name="Calvo S."/>
            <person name="Engels R."/>
            <person name="Smirnov S."/>
            <person name="Atnoor D."/>
            <person name="Brown A."/>
            <person name="Allen N."/>
            <person name="Naylor J."/>
            <person name="Stange-Thomann N."/>
            <person name="DeArellano K."/>
            <person name="Johnson R."/>
            <person name="Linton L."/>
            <person name="McEwan P."/>
            <person name="McKernan K."/>
            <person name="Talamas J."/>
            <person name="Tirrell A."/>
            <person name="Ye W."/>
            <person name="Zimmer A."/>
            <person name="Barber R.D."/>
            <person name="Cann I."/>
            <person name="Graham D.E."/>
            <person name="Grahame D.A."/>
            <person name="Guss A.M."/>
            <person name="Hedderich R."/>
            <person name="Ingram-Smith C."/>
            <person name="Kuettner H.C."/>
            <person name="Krzycki J.A."/>
            <person name="Leigh J.A."/>
            <person name="Li W."/>
            <person name="Liu J."/>
            <person name="Mukhopadhyay B."/>
            <person name="Reeve J.N."/>
            <person name="Smith K."/>
            <person name="Springer T.A."/>
            <person name="Umayam L.A."/>
            <person name="White O."/>
            <person name="White R.H."/>
            <person name="de Macario E.C."/>
            <person name="Ferry J.G."/>
            <person name="Jarrell K.F."/>
            <person name="Jing H."/>
            <person name="Macario A.J.L."/>
            <person name="Paulsen I.T."/>
            <person name="Pritchett M."/>
            <person name="Sowers K.R."/>
            <person name="Swanson R.V."/>
            <person name="Zinder S.H."/>
            <person name="Lander E."/>
            <person name="Metcalf W.W."/>
            <person name="Birren B."/>
        </authorList>
    </citation>
    <scope>NUCLEOTIDE SEQUENCE [LARGE SCALE GENOMIC DNA]</scope>
    <source>
        <strain>ATCC 35395 / DSM 2834 / JCM 12185 / C2A</strain>
    </source>
</reference>
<name>Y157_METAC</name>
<sequence>MRPRKRRIVDFEHSARQFRPFGPESEIPEEVLLTIDELEVMRLSFLENLSQGEAALRMEIHQSTFQRALKKALEKVTDALVHGKAIRIEGGDYRMPRGDGTGPAGQGPVGGGRSRGQGKGRGGRFGGPDGNCVCPACGYETPHTPGVSCSQVKCEKCGSSMVRK</sequence>
<comment type="similarity">
    <text evidence="2">Belongs to the UPF0251 family.</text>
</comment>
<gene>
    <name type="ordered locus">MA_0157</name>
</gene>
<organism>
    <name type="scientific">Methanosarcina acetivorans (strain ATCC 35395 / DSM 2834 / JCM 12185 / C2A)</name>
    <dbReference type="NCBI Taxonomy" id="188937"/>
    <lineage>
        <taxon>Archaea</taxon>
        <taxon>Methanobacteriati</taxon>
        <taxon>Methanobacteriota</taxon>
        <taxon>Stenosarchaea group</taxon>
        <taxon>Methanomicrobia</taxon>
        <taxon>Methanosarcinales</taxon>
        <taxon>Methanosarcinaceae</taxon>
        <taxon>Methanosarcina</taxon>
    </lineage>
</organism>
<feature type="chain" id="PRO_0000147573" description="UPF0251 protein MA_0157">
    <location>
        <begin position="1"/>
        <end position="164"/>
    </location>
</feature>
<feature type="region of interest" description="Disordered" evidence="1">
    <location>
        <begin position="91"/>
        <end position="124"/>
    </location>
</feature>
<feature type="compositionally biased region" description="Gly residues" evidence="1">
    <location>
        <begin position="99"/>
        <end position="115"/>
    </location>
</feature>
<protein>
    <recommendedName>
        <fullName>UPF0251 protein MA_0157</fullName>
    </recommendedName>
</protein>
<keyword id="KW-1185">Reference proteome</keyword>